<accession>Q9M2Y6</accession>
<accession>B9DHV0</accession>
<accession>Q93YM8</accession>
<comment type="function">
    <text evidence="3 4">Together with CGR3, required for homogalacturonan pectins (HG) methylesterification in the Golgi apparatus prior to integration into cell walls, essential for general growth and development (PubMed:25704846, PubMed:27208234). Promotes rosette growth (PubMed:25704846). Impacts carbon (C) partitioning, photosynthesis and respiration efficiency by influencing leaf mesophyll cell walls morphology and physiology; pectin methylesterification modulates both expansion and positioning of cells in leaves, probably by changing cell walls plasticity (PubMed:27208234).</text>
</comment>
<comment type="subcellular location">
    <subcellularLocation>
        <location evidence="3">Golgi apparatus membrane</location>
        <topology evidence="3">Single-pass membrane protein</topology>
    </subcellularLocation>
</comment>
<comment type="disruption phenotype">
    <text evidence="3 4">Plants lacking both CGR2 and CGR3 (cgr2-1 cgr3-1) exhibit severe defects in plant growth and development (e.g. shorter hypocotyl and primary root length due to reduced cell elongation, and abnormal pollen tube elongation), as well as reduced levels of pectin methylesterification associated with decreased microsomal pectin methyltransferase activity. The double mutant cgr2-1 cgr3-1 also lacks uronic acids and methyl ester (PubMed:25704846). Reduced HG methylesterification in cgr2-1 cgr3-1 double mutant results in thin but dense leaf mesophyll that limits CO(2) diffusion to chloroplasts and reduces leaf area, thus impairing photosynthesis efficiency and carbon (C) partitioning (PubMed:27208234).</text>
</comment>
<comment type="similarity">
    <text evidence="6">Belongs to the class I-like SAM-binding methyltransferase superfamily.</text>
</comment>
<comment type="sequence caution" evidence="6">
    <conflict type="erroneous initiation">
        <sequence resource="EMBL-CDS" id="AAL24420"/>
    </conflict>
    <text>Truncated N-terminus.</text>
</comment>
<evidence type="ECO:0000255" key="1"/>
<evidence type="ECO:0000255" key="2">
    <source>
        <dbReference type="PROSITE-ProRule" id="PRU00498"/>
    </source>
</evidence>
<evidence type="ECO:0000269" key="3">
    <source>
    </source>
</evidence>
<evidence type="ECO:0000269" key="4">
    <source>
    </source>
</evidence>
<evidence type="ECO:0000303" key="5">
    <source>
    </source>
</evidence>
<evidence type="ECO:0000305" key="6"/>
<evidence type="ECO:0000305" key="7">
    <source>
    </source>
</evidence>
<evidence type="ECO:0000305" key="8">
    <source>
    </source>
</evidence>
<evidence type="ECO:0000312" key="9">
    <source>
        <dbReference type="Araport" id="AT3G49720"/>
    </source>
</evidence>
<evidence type="ECO:0000312" key="10">
    <source>
        <dbReference type="EMBL" id="CAB66910.1"/>
    </source>
</evidence>
<proteinExistence type="evidence at transcript level"/>
<reference key="1">
    <citation type="journal article" date="2000" name="Nature">
        <title>Sequence and analysis of chromosome 3 of the plant Arabidopsis thaliana.</title>
        <authorList>
            <person name="Salanoubat M."/>
            <person name="Lemcke K."/>
            <person name="Rieger M."/>
            <person name="Ansorge W."/>
            <person name="Unseld M."/>
            <person name="Fartmann B."/>
            <person name="Valle G."/>
            <person name="Bloecker H."/>
            <person name="Perez-Alonso M."/>
            <person name="Obermaier B."/>
            <person name="Delseny M."/>
            <person name="Boutry M."/>
            <person name="Grivell L.A."/>
            <person name="Mache R."/>
            <person name="Puigdomenech P."/>
            <person name="De Simone V."/>
            <person name="Choisne N."/>
            <person name="Artiguenave F."/>
            <person name="Robert C."/>
            <person name="Brottier P."/>
            <person name="Wincker P."/>
            <person name="Cattolico L."/>
            <person name="Weissenbach J."/>
            <person name="Saurin W."/>
            <person name="Quetier F."/>
            <person name="Schaefer M."/>
            <person name="Mueller-Auer S."/>
            <person name="Gabel C."/>
            <person name="Fuchs M."/>
            <person name="Benes V."/>
            <person name="Wurmbach E."/>
            <person name="Drzonek H."/>
            <person name="Erfle H."/>
            <person name="Jordan N."/>
            <person name="Bangert S."/>
            <person name="Wiedelmann R."/>
            <person name="Kranz H."/>
            <person name="Voss H."/>
            <person name="Holland R."/>
            <person name="Brandt P."/>
            <person name="Nyakatura G."/>
            <person name="Vezzi A."/>
            <person name="D'Angelo M."/>
            <person name="Pallavicini A."/>
            <person name="Toppo S."/>
            <person name="Simionati B."/>
            <person name="Conrad A."/>
            <person name="Hornischer K."/>
            <person name="Kauer G."/>
            <person name="Loehnert T.-H."/>
            <person name="Nordsiek G."/>
            <person name="Reichelt J."/>
            <person name="Scharfe M."/>
            <person name="Schoen O."/>
            <person name="Bargues M."/>
            <person name="Terol J."/>
            <person name="Climent J."/>
            <person name="Navarro P."/>
            <person name="Collado C."/>
            <person name="Perez-Perez A."/>
            <person name="Ottenwaelder B."/>
            <person name="Duchemin D."/>
            <person name="Cooke R."/>
            <person name="Laudie M."/>
            <person name="Berger-Llauro C."/>
            <person name="Purnelle B."/>
            <person name="Masuy D."/>
            <person name="de Haan M."/>
            <person name="Maarse A.C."/>
            <person name="Alcaraz J.-P."/>
            <person name="Cottet A."/>
            <person name="Casacuberta E."/>
            <person name="Monfort A."/>
            <person name="Argiriou A."/>
            <person name="Flores M."/>
            <person name="Liguori R."/>
            <person name="Vitale D."/>
            <person name="Mannhaupt G."/>
            <person name="Haase D."/>
            <person name="Schoof H."/>
            <person name="Rudd S."/>
            <person name="Zaccaria P."/>
            <person name="Mewes H.-W."/>
            <person name="Mayer K.F.X."/>
            <person name="Kaul S."/>
            <person name="Town C.D."/>
            <person name="Koo H.L."/>
            <person name="Tallon L.J."/>
            <person name="Jenkins J."/>
            <person name="Rooney T."/>
            <person name="Rizzo M."/>
            <person name="Walts A."/>
            <person name="Utterback T."/>
            <person name="Fujii C.Y."/>
            <person name="Shea T.P."/>
            <person name="Creasy T.H."/>
            <person name="Haas B."/>
            <person name="Maiti R."/>
            <person name="Wu D."/>
            <person name="Peterson J."/>
            <person name="Van Aken S."/>
            <person name="Pai G."/>
            <person name="Militscher J."/>
            <person name="Sellers P."/>
            <person name="Gill J.E."/>
            <person name="Feldblyum T.V."/>
            <person name="Preuss D."/>
            <person name="Lin X."/>
            <person name="Nierman W.C."/>
            <person name="Salzberg S.L."/>
            <person name="White O."/>
            <person name="Venter J.C."/>
            <person name="Fraser C.M."/>
            <person name="Kaneko T."/>
            <person name="Nakamura Y."/>
            <person name="Sato S."/>
            <person name="Kato T."/>
            <person name="Asamizu E."/>
            <person name="Sasamoto S."/>
            <person name="Kimura T."/>
            <person name="Idesawa K."/>
            <person name="Kawashima K."/>
            <person name="Kishida Y."/>
            <person name="Kiyokawa C."/>
            <person name="Kohara M."/>
            <person name="Matsumoto M."/>
            <person name="Matsuno A."/>
            <person name="Muraki A."/>
            <person name="Nakayama S."/>
            <person name="Nakazaki N."/>
            <person name="Shinpo S."/>
            <person name="Takeuchi C."/>
            <person name="Wada T."/>
            <person name="Watanabe A."/>
            <person name="Yamada M."/>
            <person name="Yasuda M."/>
            <person name="Tabata S."/>
        </authorList>
    </citation>
    <scope>NUCLEOTIDE SEQUENCE [LARGE SCALE GENOMIC DNA]</scope>
    <source>
        <strain>cv. Columbia</strain>
    </source>
</reference>
<reference key="2">
    <citation type="journal article" date="2017" name="Plant J.">
        <title>Araport11: a complete reannotation of the Arabidopsis thaliana reference genome.</title>
        <authorList>
            <person name="Cheng C.Y."/>
            <person name="Krishnakumar V."/>
            <person name="Chan A.P."/>
            <person name="Thibaud-Nissen F."/>
            <person name="Schobel S."/>
            <person name="Town C.D."/>
        </authorList>
    </citation>
    <scope>GENOME REANNOTATION</scope>
    <source>
        <strain>cv. Columbia</strain>
    </source>
</reference>
<reference key="3">
    <citation type="journal article" date="2009" name="DNA Res.">
        <title>Analysis of multiple occurrences of alternative splicing events in Arabidopsis thaliana using novel sequenced full-length cDNAs.</title>
        <authorList>
            <person name="Iida K."/>
            <person name="Fukami-Kobayashi K."/>
            <person name="Toyoda A."/>
            <person name="Sakaki Y."/>
            <person name="Kobayashi M."/>
            <person name="Seki M."/>
            <person name="Shinozaki K."/>
        </authorList>
    </citation>
    <scope>NUCLEOTIDE SEQUENCE [LARGE SCALE MRNA]</scope>
    <source>
        <strain>cv. Columbia</strain>
        <tissue>Rosette leaf</tissue>
    </source>
</reference>
<reference key="4">
    <citation type="submission" date="2002-03" db="EMBL/GenBank/DDBJ databases">
        <title>Full-length cDNA from Arabidopsis thaliana.</title>
        <authorList>
            <person name="Brover V.V."/>
            <person name="Troukhan M.E."/>
            <person name="Alexandrov N.A."/>
            <person name="Lu Y.-P."/>
            <person name="Flavell R.B."/>
            <person name="Feldmann K.A."/>
        </authorList>
    </citation>
    <scope>NUCLEOTIDE SEQUENCE [LARGE SCALE MRNA]</scope>
</reference>
<reference key="5">
    <citation type="journal article" date="2003" name="Science">
        <title>Empirical analysis of transcriptional activity in the Arabidopsis genome.</title>
        <authorList>
            <person name="Yamada K."/>
            <person name="Lim J."/>
            <person name="Dale J.M."/>
            <person name="Chen H."/>
            <person name="Shinn P."/>
            <person name="Palm C.J."/>
            <person name="Southwick A.M."/>
            <person name="Wu H.C."/>
            <person name="Kim C.J."/>
            <person name="Nguyen M."/>
            <person name="Pham P.K."/>
            <person name="Cheuk R.F."/>
            <person name="Karlin-Newmann G."/>
            <person name="Liu S.X."/>
            <person name="Lam B."/>
            <person name="Sakano H."/>
            <person name="Wu T."/>
            <person name="Yu G."/>
            <person name="Miranda M."/>
            <person name="Quach H.L."/>
            <person name="Tripp M."/>
            <person name="Chang C.H."/>
            <person name="Lee J.M."/>
            <person name="Toriumi M.J."/>
            <person name="Chan M.M."/>
            <person name="Tang C.C."/>
            <person name="Onodera C.S."/>
            <person name="Deng J.M."/>
            <person name="Akiyama K."/>
            <person name="Ansari Y."/>
            <person name="Arakawa T."/>
            <person name="Banh J."/>
            <person name="Banno F."/>
            <person name="Bowser L."/>
            <person name="Brooks S.Y."/>
            <person name="Carninci P."/>
            <person name="Chao Q."/>
            <person name="Choy N."/>
            <person name="Enju A."/>
            <person name="Goldsmith A.D."/>
            <person name="Gurjal M."/>
            <person name="Hansen N.F."/>
            <person name="Hayashizaki Y."/>
            <person name="Johnson-Hopson C."/>
            <person name="Hsuan V.W."/>
            <person name="Iida K."/>
            <person name="Karnes M."/>
            <person name="Khan S."/>
            <person name="Koesema E."/>
            <person name="Ishida J."/>
            <person name="Jiang P.X."/>
            <person name="Jones T."/>
            <person name="Kawai J."/>
            <person name="Kamiya A."/>
            <person name="Meyers C."/>
            <person name="Nakajima M."/>
            <person name="Narusaka M."/>
            <person name="Seki M."/>
            <person name="Sakurai T."/>
            <person name="Satou M."/>
            <person name="Tamse R."/>
            <person name="Vaysberg M."/>
            <person name="Wallender E.K."/>
            <person name="Wong C."/>
            <person name="Yamamura Y."/>
            <person name="Yuan S."/>
            <person name="Shinozaki K."/>
            <person name="Davis R.W."/>
            <person name="Theologis A."/>
            <person name="Ecker J.R."/>
        </authorList>
    </citation>
    <scope>NUCLEOTIDE SEQUENCE [LARGE SCALE MRNA] OF 24-261</scope>
    <source>
        <strain>cv. Columbia</strain>
    </source>
</reference>
<reference key="6">
    <citation type="journal article" date="2015" name="Plant J.">
        <title>CGR2 and CGR3 have critical overlapping roles in pectin methylesterification and plant growth in Arabidopsis thaliana.</title>
        <authorList>
            <person name="Kim S.-J."/>
            <person name="Held M.A."/>
            <person name="Zemelis S."/>
            <person name="Wilkerson C."/>
            <person name="Brandizzi F."/>
        </authorList>
    </citation>
    <scope>FUNCTION</scope>
    <scope>DISRUPTION PHENOTYPE</scope>
    <scope>SUBCELLULAR LOCATION</scope>
    <source>
        <strain>cv. Columbia</strain>
    </source>
</reference>
<reference key="7">
    <citation type="journal article" date="2016" name="Plant Physiol.">
        <title>Pectin Methylesterification Impacts the Relationship between Photosynthesis and Plant Growth.</title>
        <authorList>
            <person name="Weraduwage S.M."/>
            <person name="Kim S.-J."/>
            <person name="Renna L."/>
            <person name="Anozie F.C."/>
            <person name="Sharkey T.D."/>
            <person name="Brandizzi F."/>
        </authorList>
    </citation>
    <scope>FUNCTION</scope>
    <scope>DISRUPTION PHENOTYPE</scope>
    <source>
        <strain>cv. Columbia</strain>
    </source>
</reference>
<keyword id="KW-0961">Cell wall biogenesis/degradation</keyword>
<keyword id="KW-0325">Glycoprotein</keyword>
<keyword id="KW-0333">Golgi apparatus</keyword>
<keyword id="KW-0472">Membrane</keyword>
<keyword id="KW-0489">Methyltransferase</keyword>
<keyword id="KW-1185">Reference proteome</keyword>
<keyword id="KW-0808">Transferase</keyword>
<keyword id="KW-0812">Transmembrane</keyword>
<keyword id="KW-1133">Transmembrane helix</keyword>
<feature type="chain" id="PRO_0000300109" description="Probable pectin methylesterase CGR2">
    <location>
        <begin position="1"/>
        <end position="261"/>
    </location>
</feature>
<feature type="topological domain" description="Cytoplasmic" evidence="7">
    <location>
        <begin position="1"/>
        <end position="35"/>
    </location>
</feature>
<feature type="transmembrane region" description="Helical" evidence="1">
    <location>
        <begin position="36"/>
        <end position="56"/>
    </location>
</feature>
<feature type="topological domain" description="Lumenal" evidence="7">
    <location>
        <begin position="57"/>
        <end position="261"/>
    </location>
</feature>
<feature type="glycosylation site" description="N-linked (GlcNAc...) asparagine" evidence="2">
    <location>
        <position position="174"/>
    </location>
</feature>
<gene>
    <name evidence="5" type="primary">CGR2</name>
    <name evidence="9" type="ordered locus">At3g49720</name>
    <name evidence="10" type="ORF">T16K5.70</name>
</gene>
<sequence>MARRQVGSTRRVGDGGSFPFAGALHSKSRSSPLLSICLVLVGACLLIGYAYSGPGIFKSIKEVSKVTGDYSCTAEVQRAIPVLKKAYGDGMRKVLHVGPDTCSVVSSLLKEEETEAWGVEPYDIEDADSHCKSFVSKGLVRVADIKFPLPYRAKSFSLVIVSDALDYLSPKYLNKTVPELARVASDGVVLFAGLPGQQRAKVAELSKFGRPAKMRSASWWNRFFVQTNLEENDAPSKKFEQAVSKGLYKPACQVFHLKPLH</sequence>
<organism>
    <name type="scientific">Arabidopsis thaliana</name>
    <name type="common">Mouse-ear cress</name>
    <dbReference type="NCBI Taxonomy" id="3702"/>
    <lineage>
        <taxon>Eukaryota</taxon>
        <taxon>Viridiplantae</taxon>
        <taxon>Streptophyta</taxon>
        <taxon>Embryophyta</taxon>
        <taxon>Tracheophyta</taxon>
        <taxon>Spermatophyta</taxon>
        <taxon>Magnoliopsida</taxon>
        <taxon>eudicotyledons</taxon>
        <taxon>Gunneridae</taxon>
        <taxon>Pentapetalae</taxon>
        <taxon>rosids</taxon>
        <taxon>malvids</taxon>
        <taxon>Brassicales</taxon>
        <taxon>Brassicaceae</taxon>
        <taxon>Camelineae</taxon>
        <taxon>Arabidopsis</taxon>
    </lineage>
</organism>
<dbReference type="EC" id="2.1.1.-" evidence="8"/>
<dbReference type="EMBL" id="AY087451">
    <property type="protein sequence ID" value="AAM64997.1"/>
    <property type="molecule type" value="mRNA"/>
</dbReference>
<dbReference type="EMBL" id="AL132965">
    <property type="protein sequence ID" value="CAB66910.1"/>
    <property type="molecule type" value="Genomic_DNA"/>
</dbReference>
<dbReference type="EMBL" id="CP002686">
    <property type="protein sequence ID" value="AEE78580.1"/>
    <property type="molecule type" value="Genomic_DNA"/>
</dbReference>
<dbReference type="EMBL" id="CP002686">
    <property type="protein sequence ID" value="AEE78581.1"/>
    <property type="molecule type" value="Genomic_DNA"/>
</dbReference>
<dbReference type="EMBL" id="CP002686">
    <property type="protein sequence ID" value="ANM64296.1"/>
    <property type="molecule type" value="Genomic_DNA"/>
</dbReference>
<dbReference type="EMBL" id="AK317656">
    <property type="protein sequence ID" value="BAH20317.1"/>
    <property type="molecule type" value="mRNA"/>
</dbReference>
<dbReference type="EMBL" id="AY059938">
    <property type="protein sequence ID" value="AAL24420.1"/>
    <property type="status" value="ALT_INIT"/>
    <property type="molecule type" value="mRNA"/>
</dbReference>
<dbReference type="EMBL" id="AY114597">
    <property type="protein sequence ID" value="AAM47916.1"/>
    <property type="molecule type" value="mRNA"/>
</dbReference>
<dbReference type="PIR" id="T46038">
    <property type="entry name" value="T46038"/>
</dbReference>
<dbReference type="RefSeq" id="NP_001078265.1">
    <property type="nucleotide sequence ID" value="NM_001084796.1"/>
</dbReference>
<dbReference type="RefSeq" id="NP_001326335.1">
    <property type="nucleotide sequence ID" value="NM_001339437.1"/>
</dbReference>
<dbReference type="RefSeq" id="NP_566924.1">
    <property type="nucleotide sequence ID" value="NM_114832.4"/>
</dbReference>
<dbReference type="BioGRID" id="9452">
    <property type="interactions" value="1"/>
</dbReference>
<dbReference type="FunCoup" id="Q9M2Y6">
    <property type="interactions" value="1533"/>
</dbReference>
<dbReference type="IntAct" id="Q9M2Y6">
    <property type="interactions" value="1"/>
</dbReference>
<dbReference type="STRING" id="3702.Q9M2Y6"/>
<dbReference type="GlyCosmos" id="Q9M2Y6">
    <property type="glycosylation" value="1 site, No reported glycans"/>
</dbReference>
<dbReference type="GlyGen" id="Q9M2Y6">
    <property type="glycosylation" value="1 site"/>
</dbReference>
<dbReference type="SwissPalm" id="Q9M2Y6"/>
<dbReference type="PaxDb" id="3702-AT3G49720.2"/>
<dbReference type="ProteomicsDB" id="224299"/>
<dbReference type="EnsemblPlants" id="AT3G49720.1">
    <property type="protein sequence ID" value="AT3G49720.1"/>
    <property type="gene ID" value="AT3G49720"/>
</dbReference>
<dbReference type="EnsemblPlants" id="AT3G49720.2">
    <property type="protein sequence ID" value="AT3G49720.2"/>
    <property type="gene ID" value="AT3G49720"/>
</dbReference>
<dbReference type="EnsemblPlants" id="AT3G49720.3">
    <property type="protein sequence ID" value="AT3G49720.3"/>
    <property type="gene ID" value="AT3G49720"/>
</dbReference>
<dbReference type="GeneID" id="824134"/>
<dbReference type="Gramene" id="AT3G49720.1">
    <property type="protein sequence ID" value="AT3G49720.1"/>
    <property type="gene ID" value="AT3G49720"/>
</dbReference>
<dbReference type="Gramene" id="AT3G49720.2">
    <property type="protein sequence ID" value="AT3G49720.2"/>
    <property type="gene ID" value="AT3G49720"/>
</dbReference>
<dbReference type="Gramene" id="AT3G49720.3">
    <property type="protein sequence ID" value="AT3G49720.3"/>
    <property type="gene ID" value="AT3G49720"/>
</dbReference>
<dbReference type="KEGG" id="ath:AT3G49720"/>
<dbReference type="Araport" id="AT3G49720"/>
<dbReference type="TAIR" id="AT3G49720">
    <property type="gene designation" value="CGR2"/>
</dbReference>
<dbReference type="eggNOG" id="ENOG502QR9D">
    <property type="taxonomic scope" value="Eukaryota"/>
</dbReference>
<dbReference type="HOGENOM" id="CLU_071215_0_0_1"/>
<dbReference type="InParanoid" id="Q9M2Y6"/>
<dbReference type="OMA" id="SHCKSFV"/>
<dbReference type="OrthoDB" id="745247at2759"/>
<dbReference type="PhylomeDB" id="Q9M2Y6"/>
<dbReference type="CD-CODE" id="4299E36E">
    <property type="entry name" value="Nucleolus"/>
</dbReference>
<dbReference type="PRO" id="PR:Q9M2Y6"/>
<dbReference type="Proteomes" id="UP000006548">
    <property type="component" value="Chromosome 3"/>
</dbReference>
<dbReference type="ExpressionAtlas" id="Q9M2Y6">
    <property type="expression patterns" value="baseline and differential"/>
</dbReference>
<dbReference type="GO" id="GO:0009535">
    <property type="term" value="C:chloroplast thylakoid membrane"/>
    <property type="evidence" value="ECO:0007005"/>
    <property type="project" value="TAIR"/>
</dbReference>
<dbReference type="GO" id="GO:0005829">
    <property type="term" value="C:cytosol"/>
    <property type="evidence" value="ECO:0007005"/>
    <property type="project" value="TAIR"/>
</dbReference>
<dbReference type="GO" id="GO:0005768">
    <property type="term" value="C:endosome"/>
    <property type="evidence" value="ECO:0007005"/>
    <property type="project" value="TAIR"/>
</dbReference>
<dbReference type="GO" id="GO:0005794">
    <property type="term" value="C:Golgi apparatus"/>
    <property type="evidence" value="ECO:0000314"/>
    <property type="project" value="TAIR"/>
</dbReference>
<dbReference type="GO" id="GO:0005797">
    <property type="term" value="C:Golgi medial cisterna"/>
    <property type="evidence" value="ECO:0007005"/>
    <property type="project" value="TAIR"/>
</dbReference>
<dbReference type="GO" id="GO:0000139">
    <property type="term" value="C:Golgi membrane"/>
    <property type="evidence" value="ECO:0007669"/>
    <property type="project" value="UniProtKB-SubCell"/>
</dbReference>
<dbReference type="GO" id="GO:0000325">
    <property type="term" value="C:plant-type vacuole"/>
    <property type="evidence" value="ECO:0007005"/>
    <property type="project" value="TAIR"/>
</dbReference>
<dbReference type="GO" id="GO:0005886">
    <property type="term" value="C:plasma membrane"/>
    <property type="evidence" value="ECO:0007005"/>
    <property type="project" value="TAIR"/>
</dbReference>
<dbReference type="GO" id="GO:0005802">
    <property type="term" value="C:trans-Golgi network"/>
    <property type="evidence" value="ECO:0007005"/>
    <property type="project" value="TAIR"/>
</dbReference>
<dbReference type="GO" id="GO:0008168">
    <property type="term" value="F:methyltransferase activity"/>
    <property type="evidence" value="ECO:0007669"/>
    <property type="project" value="UniProtKB-KW"/>
</dbReference>
<dbReference type="GO" id="GO:0015976">
    <property type="term" value="P:carbon utilization"/>
    <property type="evidence" value="ECO:0000315"/>
    <property type="project" value="UniProtKB"/>
</dbReference>
<dbReference type="GO" id="GO:0009965">
    <property type="term" value="P:leaf morphogenesis"/>
    <property type="evidence" value="ECO:0000315"/>
    <property type="project" value="UniProtKB"/>
</dbReference>
<dbReference type="GO" id="GO:0032259">
    <property type="term" value="P:methylation"/>
    <property type="evidence" value="ECO:0007669"/>
    <property type="project" value="UniProtKB-KW"/>
</dbReference>
<dbReference type="GO" id="GO:0045489">
    <property type="term" value="P:pectin biosynthetic process"/>
    <property type="evidence" value="ECO:0000316"/>
    <property type="project" value="TAIR"/>
</dbReference>
<dbReference type="GO" id="GO:0045488">
    <property type="term" value="P:pectin metabolic process"/>
    <property type="evidence" value="ECO:0000315"/>
    <property type="project" value="UniProtKB"/>
</dbReference>
<dbReference type="GO" id="GO:0009832">
    <property type="term" value="P:plant-type cell wall biogenesis"/>
    <property type="evidence" value="ECO:0000315"/>
    <property type="project" value="UniProtKB"/>
</dbReference>
<dbReference type="GO" id="GO:0009664">
    <property type="term" value="P:plant-type cell wall organization"/>
    <property type="evidence" value="ECO:0000315"/>
    <property type="project" value="UniProtKB"/>
</dbReference>
<dbReference type="GO" id="GO:0048639">
    <property type="term" value="P:positive regulation of developmental growth"/>
    <property type="evidence" value="ECO:0000315"/>
    <property type="project" value="UniProtKB"/>
</dbReference>
<dbReference type="GO" id="GO:1905157">
    <property type="term" value="P:positive regulation of photosynthesis"/>
    <property type="evidence" value="ECO:0000315"/>
    <property type="project" value="UniProtKB"/>
</dbReference>
<dbReference type="GO" id="GO:1903942">
    <property type="term" value="P:positive regulation of respiratory gaseous exchange"/>
    <property type="evidence" value="ECO:0000315"/>
    <property type="project" value="UniProtKB"/>
</dbReference>
<dbReference type="GO" id="GO:0051512">
    <property type="term" value="P:positive regulation of unidimensional cell growth"/>
    <property type="evidence" value="ECO:0000316"/>
    <property type="project" value="TAIR"/>
</dbReference>
<dbReference type="FunFam" id="3.40.50.150:FF:000350">
    <property type="entry name" value="Probable pectin methylesterase CGR3"/>
    <property type="match status" value="1"/>
</dbReference>
<dbReference type="Gene3D" id="3.40.50.150">
    <property type="entry name" value="Vaccinia Virus protein VP39"/>
    <property type="match status" value="1"/>
</dbReference>
<dbReference type="InterPro" id="IPR044689">
    <property type="entry name" value="CGR2/3"/>
</dbReference>
<dbReference type="InterPro" id="IPR029063">
    <property type="entry name" value="SAM-dependent_MTases_sf"/>
</dbReference>
<dbReference type="PANTHER" id="PTHR34208:SF2">
    <property type="entry name" value="PECTIN METHYLESTERASE CGR2-RELATED"/>
    <property type="match status" value="1"/>
</dbReference>
<dbReference type="PANTHER" id="PTHR34208">
    <property type="entry name" value="S-ADENOSYL-L-METHIONINE-DEPENDENT METHYLTRANSFERASE-RELATED"/>
    <property type="match status" value="1"/>
</dbReference>
<dbReference type="SUPFAM" id="SSF53335">
    <property type="entry name" value="S-adenosyl-L-methionine-dependent methyltransferases"/>
    <property type="match status" value="1"/>
</dbReference>
<protein>
    <recommendedName>
        <fullName evidence="5">Probable pectin methylesterase CGR2</fullName>
        <ecNumber evidence="8">2.1.1.-</ecNumber>
    </recommendedName>
    <alternativeName>
        <fullName evidence="5">Cotton Golgi-related 2</fullName>
    </alternativeName>
</protein>
<name>CGR2_ARATH</name>